<name>GST_BRUAN</name>
<evidence type="ECO:0000250" key="1"/>
<evidence type="ECO:0000269" key="2">
    <source>
    </source>
</evidence>
<evidence type="ECO:0000269" key="3">
    <source>
    </source>
</evidence>
<evidence type="ECO:0000305" key="4"/>
<evidence type="ECO:0007829" key="5">
    <source>
        <dbReference type="PDB" id="2PVQ"/>
    </source>
</evidence>
<sequence>MKLYYKVGACSLAPHIILSEAGLPYELEAVDLKAKKTADGGDYFAVNPRGAVPALEVKPGTVITQNAAILQYIGDHSDVAAFKPAYGSIERARLQEALGFCSDLHAAFSGLFAPNLSEEARAGVIANINRRLGQLEAMLSDKNAYWLGDDFTQPDAYASVIIGWGVGQKLDLSAYPKALKLRERVLARPNVQKAFKEEGLN</sequence>
<accession>P81065</accession>
<feature type="chain" id="PRO_0000185973" description="Glutathione S-transferase">
    <location>
        <begin position="1"/>
        <end position="201"/>
    </location>
</feature>
<feature type="domain" description="GST N-terminal">
    <location>
        <begin position="1"/>
        <end position="81"/>
    </location>
</feature>
<feature type="domain" description="GST C-terminal">
    <location>
        <begin position="87"/>
        <end position="201"/>
    </location>
</feature>
<feature type="binding site" evidence="2">
    <location>
        <position position="10"/>
    </location>
    <ligand>
        <name>glutathione</name>
        <dbReference type="ChEBI" id="CHEBI:57925"/>
    </ligand>
</feature>
<feature type="binding site" evidence="2">
    <location>
        <position position="35"/>
    </location>
    <ligand>
        <name>glutathione</name>
        <dbReference type="ChEBI" id="CHEBI:57925"/>
    </ligand>
</feature>
<feature type="binding site" evidence="2">
    <location>
        <position position="52"/>
    </location>
    <ligand>
        <name>glutathione</name>
        <dbReference type="ChEBI" id="CHEBI:57925"/>
    </ligand>
</feature>
<feature type="binding site" evidence="2">
    <location>
        <begin position="65"/>
        <end position="66"/>
    </location>
    <ligand>
        <name>glutathione</name>
        <dbReference type="ChEBI" id="CHEBI:57925"/>
    </ligand>
</feature>
<feature type="binding site" evidence="2">
    <location>
        <begin position="102"/>
        <end position="105"/>
    </location>
    <ligand>
        <name>glutathione</name>
        <dbReference type="ChEBI" id="CHEBI:57925"/>
    </ligand>
</feature>
<feature type="mutagenesis site" description="Strongly reduced affinity for glutathione. Reduces enzyme activity by about 50%." evidence="2">
    <original>C</original>
    <variation>A</variation>
    <location>
        <position position="10"/>
    </location>
</feature>
<feature type="mutagenesis site" description="Reduced activity." evidence="3">
    <original>S</original>
    <variation>A</variation>
    <location>
        <position position="11"/>
    </location>
</feature>
<feature type="strand" evidence="5">
    <location>
        <begin position="2"/>
        <end position="5"/>
    </location>
</feature>
<feature type="helix" evidence="5">
    <location>
        <begin position="12"/>
        <end position="21"/>
    </location>
</feature>
<feature type="strand" evidence="5">
    <location>
        <begin position="26"/>
        <end position="29"/>
    </location>
</feature>
<feature type="turn" evidence="5">
    <location>
        <begin position="32"/>
        <end position="35"/>
    </location>
</feature>
<feature type="helix" evidence="5">
    <location>
        <begin position="43"/>
        <end position="45"/>
    </location>
</feature>
<feature type="strand" evidence="5">
    <location>
        <begin position="54"/>
        <end position="58"/>
    </location>
</feature>
<feature type="strand" evidence="5">
    <location>
        <begin position="61"/>
        <end position="65"/>
    </location>
</feature>
<feature type="helix" evidence="5">
    <location>
        <begin position="66"/>
        <end position="75"/>
    </location>
</feature>
<feature type="helix" evidence="5">
    <location>
        <begin position="80"/>
        <end position="82"/>
    </location>
</feature>
<feature type="helix" evidence="5">
    <location>
        <begin position="89"/>
        <end position="109"/>
    </location>
</feature>
<feature type="helix" evidence="5">
    <location>
        <begin position="110"/>
        <end position="112"/>
    </location>
</feature>
<feature type="helix" evidence="5">
    <location>
        <begin position="118"/>
        <end position="138"/>
    </location>
</feature>
<feature type="strand" evidence="5">
    <location>
        <begin position="148"/>
        <end position="150"/>
    </location>
</feature>
<feature type="helix" evidence="5">
    <location>
        <begin position="153"/>
        <end position="167"/>
    </location>
</feature>
<feature type="helix" evidence="5">
    <location>
        <begin position="176"/>
        <end position="186"/>
    </location>
</feature>
<feature type="helix" evidence="5">
    <location>
        <begin position="189"/>
        <end position="197"/>
    </location>
</feature>
<reference key="1">
    <citation type="journal article" date="1998" name="Biochem. J.">
        <title>Molecular cloning, expression and site-directed mutagenesis of glutathione S-transferase from Ochrobactrum anthropi.</title>
        <authorList>
            <person name="Favaloro B."/>
            <person name="Tamburro A."/>
            <person name="Angelucci S."/>
            <person name="de Luca A."/>
            <person name="di Ilio C."/>
            <person name="Rotilio D."/>
        </authorList>
    </citation>
    <scope>NUCLEOTIDE SEQUENCE [GENOMIC DNA]</scope>
    <scope>PROTEIN SEQUENCE OF 1-25 AND 50-74</scope>
    <scope>MUTAGENESIS</scope>
</reference>
<reference key="2">
    <citation type="journal article" date="1998" name="FEMS Microbiol. Lett.">
        <title>Purification and characterization of a novel glutathione transferase from Ochrobactrum anthropi.</title>
        <authorList>
            <person name="Favaloro B."/>
            <person name="Melino S."/>
            <person name="Petruzzelli R."/>
            <person name="di Ilio C."/>
            <person name="Rotilio D."/>
        </authorList>
    </citation>
    <scope>PROTEIN SEQUENCE OF 1-25</scope>
</reference>
<reference key="3">
    <citation type="journal article" date="2008" name="Proteins">
        <title>Cysteine 10 is critical for the activity of Ochrobactrum anthropi glutathione transferase and its mutation to alanine causes the preferential binding of glutathione to the H-site.</title>
        <authorList>
            <person name="Allocati N."/>
            <person name="Federici L."/>
            <person name="Masulli M."/>
            <person name="Favaloro B."/>
            <person name="Di Ilio C."/>
        </authorList>
    </citation>
    <scope>X-RAY CRYSTALLOGRAPHY (1.8 ANGSTROMS) IN COMPLEX WITH GLUTATHIONE</scope>
    <scope>CATALYTIC ACTIVITY</scope>
    <scope>MUTAGENESIS OF CYS-10</scope>
    <scope>BIOPHYSICOCHEMICAL PROPERTIES</scope>
</reference>
<keyword id="KW-0002">3D-structure</keyword>
<keyword id="KW-0963">Cytoplasm</keyword>
<keyword id="KW-0903">Direct protein sequencing</keyword>
<keyword id="KW-0808">Transferase</keyword>
<protein>
    <recommendedName>
        <fullName>Glutathione S-transferase</fullName>
        <ecNumber>2.5.1.18</ecNumber>
    </recommendedName>
</protein>
<gene>
    <name type="primary">gst</name>
</gene>
<comment type="function">
    <text>Conjugation of reduced glutathione to a wide number of exogenous and endogenous hydrophobic electrophiles.</text>
</comment>
<comment type="catalytic activity">
    <reaction evidence="2">
        <text>RX + glutathione = an S-substituted glutathione + a halide anion + H(+)</text>
        <dbReference type="Rhea" id="RHEA:16437"/>
        <dbReference type="ChEBI" id="CHEBI:15378"/>
        <dbReference type="ChEBI" id="CHEBI:16042"/>
        <dbReference type="ChEBI" id="CHEBI:17792"/>
        <dbReference type="ChEBI" id="CHEBI:57925"/>
        <dbReference type="ChEBI" id="CHEBI:90779"/>
        <dbReference type="EC" id="2.5.1.18"/>
    </reaction>
</comment>
<comment type="biophysicochemical properties">
    <kinetics>
        <KM evidence="2">0.132 mM for glutathione</KM>
    </kinetics>
</comment>
<comment type="subunit">
    <text evidence="1">Homodimer.</text>
</comment>
<comment type="subcellular location">
    <subcellularLocation>
        <location evidence="1">Cytoplasm</location>
    </subcellularLocation>
</comment>
<comment type="similarity">
    <text evidence="4">Belongs to the GST superfamily. Beta family.</text>
</comment>
<proteinExistence type="evidence at protein level"/>
<dbReference type="EC" id="2.5.1.18"/>
<dbReference type="EMBL" id="Y17279">
    <property type="protein sequence ID" value="CAA76728.1"/>
    <property type="molecule type" value="Genomic_DNA"/>
</dbReference>
<dbReference type="RefSeq" id="WP_010659377.1">
    <property type="nucleotide sequence ID" value="NZ_WBXA01000003.1"/>
</dbReference>
<dbReference type="PDB" id="2NTO">
    <property type="method" value="X-ray"/>
    <property type="resolution" value="2.10 A"/>
    <property type="chains" value="A=1-201"/>
</dbReference>
<dbReference type="PDB" id="2PVQ">
    <property type="method" value="X-ray"/>
    <property type="resolution" value="1.80 A"/>
    <property type="chains" value="A=1-201"/>
</dbReference>
<dbReference type="PDBsum" id="2NTO"/>
<dbReference type="PDBsum" id="2PVQ"/>
<dbReference type="SMR" id="P81065"/>
<dbReference type="GeneID" id="61318189"/>
<dbReference type="BRENDA" id="2.5.1.18">
    <property type="organism ID" value="4382"/>
</dbReference>
<dbReference type="SABIO-RK" id="P81065"/>
<dbReference type="EvolutionaryTrace" id="P81065"/>
<dbReference type="GO" id="GO:0005737">
    <property type="term" value="C:cytoplasm"/>
    <property type="evidence" value="ECO:0007669"/>
    <property type="project" value="UniProtKB-SubCell"/>
</dbReference>
<dbReference type="GO" id="GO:0004364">
    <property type="term" value="F:glutathione transferase activity"/>
    <property type="evidence" value="ECO:0007669"/>
    <property type="project" value="UniProtKB-EC"/>
</dbReference>
<dbReference type="CDD" id="cd03188">
    <property type="entry name" value="GST_C_Beta"/>
    <property type="match status" value="1"/>
</dbReference>
<dbReference type="CDD" id="cd03057">
    <property type="entry name" value="GST_N_Beta"/>
    <property type="match status" value="1"/>
</dbReference>
<dbReference type="Gene3D" id="1.20.1050.10">
    <property type="match status" value="1"/>
</dbReference>
<dbReference type="Gene3D" id="3.40.30.10">
    <property type="entry name" value="Glutaredoxin"/>
    <property type="match status" value="1"/>
</dbReference>
<dbReference type="InterPro" id="IPR010987">
    <property type="entry name" value="Glutathione-S-Trfase_C-like"/>
</dbReference>
<dbReference type="InterPro" id="IPR036282">
    <property type="entry name" value="Glutathione-S-Trfase_C_sf"/>
</dbReference>
<dbReference type="InterPro" id="IPR040079">
    <property type="entry name" value="Glutathione_S-Trfase"/>
</dbReference>
<dbReference type="InterPro" id="IPR004045">
    <property type="entry name" value="Glutathione_S-Trfase_N"/>
</dbReference>
<dbReference type="InterPro" id="IPR004046">
    <property type="entry name" value="GST_C"/>
</dbReference>
<dbReference type="InterPro" id="IPR036249">
    <property type="entry name" value="Thioredoxin-like_sf"/>
</dbReference>
<dbReference type="PANTHER" id="PTHR44051:SF8">
    <property type="entry name" value="GLUTATHIONE S-TRANSFERASE GSTA"/>
    <property type="match status" value="1"/>
</dbReference>
<dbReference type="PANTHER" id="PTHR44051">
    <property type="entry name" value="GLUTATHIONE S-TRANSFERASE-RELATED"/>
    <property type="match status" value="1"/>
</dbReference>
<dbReference type="Pfam" id="PF00043">
    <property type="entry name" value="GST_C"/>
    <property type="match status" value="1"/>
</dbReference>
<dbReference type="Pfam" id="PF02798">
    <property type="entry name" value="GST_N"/>
    <property type="match status" value="1"/>
</dbReference>
<dbReference type="SFLD" id="SFLDS00019">
    <property type="entry name" value="Glutathione_Transferase_(cytos"/>
    <property type="match status" value="1"/>
</dbReference>
<dbReference type="SFLD" id="SFLDG01150">
    <property type="entry name" value="Main.1:_Beta-like"/>
    <property type="match status" value="1"/>
</dbReference>
<dbReference type="SUPFAM" id="SSF47616">
    <property type="entry name" value="GST C-terminal domain-like"/>
    <property type="match status" value="1"/>
</dbReference>
<dbReference type="SUPFAM" id="SSF52833">
    <property type="entry name" value="Thioredoxin-like"/>
    <property type="match status" value="1"/>
</dbReference>
<dbReference type="PROSITE" id="PS50405">
    <property type="entry name" value="GST_CTER"/>
    <property type="match status" value="1"/>
</dbReference>
<dbReference type="PROSITE" id="PS50404">
    <property type="entry name" value="GST_NTER"/>
    <property type="match status" value="1"/>
</dbReference>
<organism>
    <name type="scientific">Brucella anthropi</name>
    <name type="common">Ochrobactrum anthropi</name>
    <dbReference type="NCBI Taxonomy" id="529"/>
    <lineage>
        <taxon>Bacteria</taxon>
        <taxon>Pseudomonadati</taxon>
        <taxon>Pseudomonadota</taxon>
        <taxon>Alphaproteobacteria</taxon>
        <taxon>Hyphomicrobiales</taxon>
        <taxon>Brucellaceae</taxon>
        <taxon>Brucella/Ochrobactrum group</taxon>
        <taxon>Brucella</taxon>
    </lineage>
</organism>